<comment type="function">
    <text evidence="1">NDH-1 shuttles electrons from NADH, via FMN and iron-sulfur (Fe-S) centers, to quinones in the respiratory chain. The immediate electron acceptor for the enzyme in this species is believed to be ubiquinone. Couples the redox reaction to proton translocation (for every two electrons transferred, four hydrogen ions are translocated across the cytoplasmic membrane), and thus conserves the redox energy in a proton gradient.</text>
</comment>
<comment type="catalytic activity">
    <reaction evidence="1">
        <text>a quinone + NADH + 5 H(+)(in) = a quinol + NAD(+) + 4 H(+)(out)</text>
        <dbReference type="Rhea" id="RHEA:57888"/>
        <dbReference type="ChEBI" id="CHEBI:15378"/>
        <dbReference type="ChEBI" id="CHEBI:24646"/>
        <dbReference type="ChEBI" id="CHEBI:57540"/>
        <dbReference type="ChEBI" id="CHEBI:57945"/>
        <dbReference type="ChEBI" id="CHEBI:132124"/>
    </reaction>
</comment>
<comment type="subunit">
    <text evidence="1">NDH-1 is composed of 14 different subunits. Subunits NuoB, C, D, E, F, and G constitute the peripheral sector of the complex.</text>
</comment>
<comment type="subcellular location">
    <subcellularLocation>
        <location evidence="1">Cell inner membrane</location>
        <topology evidence="1">Peripheral membrane protein</topology>
        <orientation evidence="1">Cytoplasmic side</orientation>
    </subcellularLocation>
</comment>
<comment type="similarity">
    <text evidence="1">Belongs to the complex I 30 kDa subunit family.</text>
</comment>
<keyword id="KW-0997">Cell inner membrane</keyword>
<keyword id="KW-1003">Cell membrane</keyword>
<keyword id="KW-0472">Membrane</keyword>
<keyword id="KW-0520">NAD</keyword>
<keyword id="KW-0874">Quinone</keyword>
<keyword id="KW-1278">Translocase</keyword>
<keyword id="KW-0813">Transport</keyword>
<keyword id="KW-0830">Ubiquinone</keyword>
<name>NUOC_BURO1</name>
<gene>
    <name evidence="1" type="primary">nuoC</name>
    <name type="ordered locus">Bcen_1635</name>
</gene>
<protein>
    <recommendedName>
        <fullName evidence="1">NADH-quinone oxidoreductase subunit C</fullName>
        <ecNumber evidence="1">7.1.1.-</ecNumber>
    </recommendedName>
    <alternativeName>
        <fullName evidence="1">NADH dehydrogenase I subunit C</fullName>
    </alternativeName>
    <alternativeName>
        <fullName evidence="1">NDH-1 subunit C</fullName>
    </alternativeName>
</protein>
<accession>Q1BV15</accession>
<sequence length="200" mass="22823">MASKIETLKANLEAALGARVVSLTEAIGELTLVVKASDYLEVAKTLRDDPKLRFEQLIDLCGVDYQTFGDGAYDGPRFAAVSHLLSVTNNWRLRLRAFAPDDDLPIVASLVDIWTSANWYEREAFDLYGIVFEGHPDLRRILTDYGFIGHPFRKDFPVSGYVEMRYDPEEKRVVYQPVTIEPREITPRVIREDRYGGLKH</sequence>
<feature type="chain" id="PRO_0000358060" description="NADH-quinone oxidoreductase subunit C">
    <location>
        <begin position="1"/>
        <end position="200"/>
    </location>
</feature>
<organism>
    <name type="scientific">Burkholderia orbicola (strain AU 1054)</name>
    <dbReference type="NCBI Taxonomy" id="331271"/>
    <lineage>
        <taxon>Bacteria</taxon>
        <taxon>Pseudomonadati</taxon>
        <taxon>Pseudomonadota</taxon>
        <taxon>Betaproteobacteria</taxon>
        <taxon>Burkholderiales</taxon>
        <taxon>Burkholderiaceae</taxon>
        <taxon>Burkholderia</taxon>
        <taxon>Burkholderia cepacia complex</taxon>
        <taxon>Burkholderia orbicola</taxon>
    </lineage>
</organism>
<dbReference type="EC" id="7.1.1.-" evidence="1"/>
<dbReference type="EMBL" id="CP000378">
    <property type="protein sequence ID" value="ABF76540.1"/>
    <property type="molecule type" value="Genomic_DNA"/>
</dbReference>
<dbReference type="SMR" id="Q1BV15"/>
<dbReference type="HOGENOM" id="CLU_042628_2_1_4"/>
<dbReference type="GO" id="GO:0005886">
    <property type="term" value="C:plasma membrane"/>
    <property type="evidence" value="ECO:0007669"/>
    <property type="project" value="UniProtKB-SubCell"/>
</dbReference>
<dbReference type="GO" id="GO:0008137">
    <property type="term" value="F:NADH dehydrogenase (ubiquinone) activity"/>
    <property type="evidence" value="ECO:0007669"/>
    <property type="project" value="InterPro"/>
</dbReference>
<dbReference type="GO" id="GO:0050136">
    <property type="term" value="F:NADH:ubiquinone reductase (non-electrogenic) activity"/>
    <property type="evidence" value="ECO:0007669"/>
    <property type="project" value="UniProtKB-UniRule"/>
</dbReference>
<dbReference type="GO" id="GO:0048038">
    <property type="term" value="F:quinone binding"/>
    <property type="evidence" value="ECO:0007669"/>
    <property type="project" value="UniProtKB-KW"/>
</dbReference>
<dbReference type="Gene3D" id="3.30.460.80">
    <property type="entry name" value="NADH:ubiquinone oxidoreductase, 30kDa subunit"/>
    <property type="match status" value="1"/>
</dbReference>
<dbReference type="HAMAP" id="MF_01357">
    <property type="entry name" value="NDH1_NuoC"/>
    <property type="match status" value="1"/>
</dbReference>
<dbReference type="InterPro" id="IPR010218">
    <property type="entry name" value="NADH_DH_suC"/>
</dbReference>
<dbReference type="InterPro" id="IPR037232">
    <property type="entry name" value="NADH_quin_OxRdtase_su_C/D-like"/>
</dbReference>
<dbReference type="InterPro" id="IPR001268">
    <property type="entry name" value="NADH_UbQ_OxRdtase_30kDa_su"/>
</dbReference>
<dbReference type="InterPro" id="IPR020396">
    <property type="entry name" value="NADH_UbQ_OxRdtase_CS"/>
</dbReference>
<dbReference type="NCBIfam" id="TIGR01961">
    <property type="entry name" value="NuoC_fam"/>
    <property type="match status" value="1"/>
</dbReference>
<dbReference type="NCBIfam" id="NF004730">
    <property type="entry name" value="PRK06074.1-1"/>
    <property type="match status" value="1"/>
</dbReference>
<dbReference type="PANTHER" id="PTHR10884:SF14">
    <property type="entry name" value="NADH DEHYDROGENASE [UBIQUINONE] IRON-SULFUR PROTEIN 3, MITOCHONDRIAL"/>
    <property type="match status" value="1"/>
</dbReference>
<dbReference type="PANTHER" id="PTHR10884">
    <property type="entry name" value="NADH DEHYDROGENASE UBIQUINONE IRON-SULFUR PROTEIN 3"/>
    <property type="match status" value="1"/>
</dbReference>
<dbReference type="Pfam" id="PF00329">
    <property type="entry name" value="Complex1_30kDa"/>
    <property type="match status" value="1"/>
</dbReference>
<dbReference type="SUPFAM" id="SSF143243">
    <property type="entry name" value="Nqo5-like"/>
    <property type="match status" value="1"/>
</dbReference>
<dbReference type="PROSITE" id="PS00542">
    <property type="entry name" value="COMPLEX1_30K"/>
    <property type="match status" value="1"/>
</dbReference>
<reference key="1">
    <citation type="submission" date="2006-05" db="EMBL/GenBank/DDBJ databases">
        <title>Complete sequence of chromosome 1 of Burkholderia cenocepacia AU 1054.</title>
        <authorList>
            <consortium name="US DOE Joint Genome Institute"/>
            <person name="Copeland A."/>
            <person name="Lucas S."/>
            <person name="Lapidus A."/>
            <person name="Barry K."/>
            <person name="Detter J.C."/>
            <person name="Glavina del Rio T."/>
            <person name="Hammon N."/>
            <person name="Israni S."/>
            <person name="Dalin E."/>
            <person name="Tice H."/>
            <person name="Pitluck S."/>
            <person name="Chain P."/>
            <person name="Malfatti S."/>
            <person name="Shin M."/>
            <person name="Vergez L."/>
            <person name="Schmutz J."/>
            <person name="Larimer F."/>
            <person name="Land M."/>
            <person name="Hauser L."/>
            <person name="Kyrpides N."/>
            <person name="Lykidis A."/>
            <person name="LiPuma J.J."/>
            <person name="Konstantinidis K."/>
            <person name="Tiedje J.M."/>
            <person name="Richardson P."/>
        </authorList>
    </citation>
    <scope>NUCLEOTIDE SEQUENCE [LARGE SCALE GENOMIC DNA]</scope>
    <source>
        <strain>AU 1054</strain>
    </source>
</reference>
<evidence type="ECO:0000255" key="1">
    <source>
        <dbReference type="HAMAP-Rule" id="MF_01357"/>
    </source>
</evidence>
<proteinExistence type="inferred from homology"/>